<feature type="chain" id="PRO_0000133403" description="Protein E7">
    <location>
        <begin position="1"/>
        <end position="103"/>
    </location>
</feature>
<feature type="zinc finger region" evidence="1">
    <location>
        <begin position="56"/>
        <end position="94"/>
    </location>
</feature>
<feature type="region of interest" description="E7 terminal domain" evidence="1">
    <location>
        <begin position="1"/>
        <end position="47"/>
    </location>
</feature>
<feature type="short sequence motif" description="LXCXE motif; interaction with host RB1 and TMEM173/STING" evidence="1">
    <location>
        <begin position="27"/>
        <end position="31"/>
    </location>
</feature>
<feature type="short sequence motif" description="Nuclear export signal" evidence="1">
    <location>
        <begin position="76"/>
        <end position="84"/>
    </location>
</feature>
<reference key="1">
    <citation type="journal article" date="1991" name="Virology">
        <title>A subtype of human papillomavirus 5 (HPV-5b) and its subgenomic segment amplified in a carcinoma: nucleotide sequences and genomic organizations.</title>
        <authorList>
            <person name="Yabe Y."/>
            <person name="Sakai A."/>
            <person name="Hitsumoto T."/>
            <person name="Kato H."/>
            <person name="Ogura H."/>
        </authorList>
    </citation>
    <scope>NUCLEOTIDE SEQUENCE [GENOMIC DNA]</scope>
</reference>
<reference key="2">
    <citation type="journal article" date="2002" name="Rev. Med. Virol.">
        <title>Interactions of SV40 large T antigen and other viral proteins with retinoblastoma tumour suppressor.</title>
        <authorList>
            <person name="Lee C."/>
            <person name="Cho Y."/>
        </authorList>
    </citation>
    <scope>REVIEW</scope>
</reference>
<protein>
    <recommendedName>
        <fullName evidence="1">Protein E7</fullName>
    </recommendedName>
</protein>
<name>VE7_HPV5B</name>
<organismHost>
    <name type="scientific">Homo sapiens</name>
    <name type="common">Human</name>
    <dbReference type="NCBI Taxonomy" id="9606"/>
</organismHost>
<dbReference type="EMBL" id="D90252">
    <property type="protein sequence ID" value="BAA14293.1"/>
    <property type="molecule type" value="Genomic_DNA"/>
</dbReference>
<dbReference type="PIR" id="F40480">
    <property type="entry name" value="W7WLB5"/>
</dbReference>
<dbReference type="SMR" id="P26559"/>
<dbReference type="Proteomes" id="UP000007669">
    <property type="component" value="Genome"/>
</dbReference>
<dbReference type="GO" id="GO:0030430">
    <property type="term" value="C:host cell cytoplasm"/>
    <property type="evidence" value="ECO:0007669"/>
    <property type="project" value="UniProtKB-SubCell"/>
</dbReference>
<dbReference type="GO" id="GO:0042025">
    <property type="term" value="C:host cell nucleus"/>
    <property type="evidence" value="ECO:0007669"/>
    <property type="project" value="UniProtKB-SubCell"/>
</dbReference>
<dbReference type="GO" id="GO:0003677">
    <property type="term" value="F:DNA binding"/>
    <property type="evidence" value="ECO:0007669"/>
    <property type="project" value="UniProtKB-UniRule"/>
</dbReference>
<dbReference type="GO" id="GO:0003700">
    <property type="term" value="F:DNA-binding transcription factor activity"/>
    <property type="evidence" value="ECO:0007669"/>
    <property type="project" value="UniProtKB-UniRule"/>
</dbReference>
<dbReference type="GO" id="GO:0019904">
    <property type="term" value="F:protein domain specific binding"/>
    <property type="evidence" value="ECO:0007669"/>
    <property type="project" value="UniProtKB-UniRule"/>
</dbReference>
<dbReference type="GO" id="GO:0008270">
    <property type="term" value="F:zinc ion binding"/>
    <property type="evidence" value="ECO:0007669"/>
    <property type="project" value="UniProtKB-KW"/>
</dbReference>
<dbReference type="GO" id="GO:0006351">
    <property type="term" value="P:DNA-templated transcription"/>
    <property type="evidence" value="ECO:0007669"/>
    <property type="project" value="UniProtKB-UniRule"/>
</dbReference>
<dbReference type="GO" id="GO:0039645">
    <property type="term" value="P:symbiont-mediated perturbation of host cell cycle G1/S transition checkpoint"/>
    <property type="evidence" value="ECO:0007669"/>
    <property type="project" value="UniProtKB-UniRule"/>
</dbReference>
<dbReference type="GO" id="GO:0052170">
    <property type="term" value="P:symbiont-mediated suppression of host innate immune response"/>
    <property type="evidence" value="ECO:0007669"/>
    <property type="project" value="UniProtKB-KW"/>
</dbReference>
<dbReference type="GO" id="GO:0039502">
    <property type="term" value="P:symbiont-mediated suppression of host type I interferon-mediated signaling pathway"/>
    <property type="evidence" value="ECO:0007669"/>
    <property type="project" value="UniProtKB-UniRule"/>
</dbReference>
<dbReference type="Gene3D" id="3.30.160.330">
    <property type="match status" value="1"/>
</dbReference>
<dbReference type="HAMAP" id="MF_04004">
    <property type="entry name" value="PPV_E7"/>
    <property type="match status" value="1"/>
</dbReference>
<dbReference type="InterPro" id="IPR000148">
    <property type="entry name" value="Papilloma_E7"/>
</dbReference>
<dbReference type="Pfam" id="PF00527">
    <property type="entry name" value="E7"/>
    <property type="match status" value="1"/>
</dbReference>
<dbReference type="PIRSF" id="PIRSF003407">
    <property type="entry name" value="Papvi_E7"/>
    <property type="match status" value="1"/>
</dbReference>
<dbReference type="SUPFAM" id="SSF161234">
    <property type="entry name" value="E7 C-terminal domain-like"/>
    <property type="match status" value="1"/>
</dbReference>
<gene>
    <name evidence="1" type="primary">E7</name>
</gene>
<organism>
    <name type="scientific">Human papillomavirus type 5b</name>
    <dbReference type="NCBI Taxonomy" id="10599"/>
    <lineage>
        <taxon>Viruses</taxon>
        <taxon>Monodnaviria</taxon>
        <taxon>Shotokuvirae</taxon>
        <taxon>Cossaviricota</taxon>
        <taxon>Papovaviricetes</taxon>
        <taxon>Zurhausenvirales</taxon>
        <taxon>Papillomaviridae</taxon>
        <taxon>Firstpapillomavirinae</taxon>
        <taxon>Betapapillomavirus</taxon>
        <taxon>Betapapillomavirus 1</taxon>
    </lineage>
</organism>
<proteinExistence type="inferred from homology"/>
<comment type="function">
    <text evidence="1">Plays a role in viral genome replication by driving entry of quiescent cells into the cell cycle. Stimulation of progression from G1 to S phase allows the virus to efficiently use the cellular DNA replicating machinery to achieve viral genome replication. E7 protein has both transforming and trans-activating activities. Induces the disassembly of the E2F1 transcription factor from RB1, with subsequent transcriptional activation of E2F1-regulated S-phase genes. Interferes with host histone deacetylation mediated by HDAC1 and HDAC2, leading to transcription activation. Also plays a role in the inhibition of both antiviral and antiproliferative functions of host interferon alpha. Interaction with host TMEM173/STING impairs the ability of TMEM173/STING to sense cytosolic DNA and promote the production of type I interferon (IFN-alpha and IFN-beta).</text>
</comment>
<comment type="subunit">
    <text evidence="1">Homodimer. Homooligomer. Interacts with host RB1; this interaction induces dissociation of RB1-E2F1 complex thereby disrupting RB1 activity. Interacts with host EP300; this interaction represses EP300 transcriptional activity. Interacts with protein E2; this interaction inhibits E7 oncogenic activity. Interacts with host TMEM173/STING; this interaction impairs the ability of TMEM173/STING to sense cytosolic DNA and promote the production of type I interferon (IFN-alpha and IFN-beta).</text>
</comment>
<comment type="subcellular location">
    <subcellularLocation>
        <location evidence="1">Host cytoplasm</location>
    </subcellularLocation>
    <subcellularLocation>
        <location evidence="1">Host nucleus</location>
    </subcellularLocation>
    <text evidence="1">Predominantly found in the host nucleus.</text>
</comment>
<comment type="domain">
    <text evidence="1">The E7 terminal domain is an intrinsically disordered domain, whose flexibility and conformational transitions confer target adaptability to the oncoprotein. It allows adaptation to a variety of protein targets and exposes the PEST degradation sequence that regulates its turnover in the cell.</text>
</comment>
<comment type="PTM">
    <text evidence="1">Highly phosphorylated.</text>
</comment>
<comment type="similarity">
    <text evidence="1">Belongs to the papillomaviridae E7 protein family.</text>
</comment>
<sequence length="103" mass="11699">MIGKEVTVQDIILELSEVQPEVLPVDLFCEEELPNEQETEEEPDIERISYKVIAPCGCRHCEVKLRIFVHATEFGIRAFQQLLTGDLQLLCPDCRGNCKHDGS</sequence>
<evidence type="ECO:0000255" key="1">
    <source>
        <dbReference type="HAMAP-Rule" id="MF_04004"/>
    </source>
</evidence>
<accession>P26559</accession>
<keyword id="KW-0010">Activator</keyword>
<keyword id="KW-0238">DNA-binding</keyword>
<keyword id="KW-0244">Early protein</keyword>
<keyword id="KW-1078">G1/S host cell cycle checkpoint dysregulation by virus</keyword>
<keyword id="KW-1035">Host cytoplasm</keyword>
<keyword id="KW-1048">Host nucleus</keyword>
<keyword id="KW-0945">Host-virus interaction</keyword>
<keyword id="KW-1090">Inhibition of host innate immune response by virus</keyword>
<keyword id="KW-1114">Inhibition of host interferon signaling pathway by virus</keyword>
<keyword id="KW-0922">Interferon antiviral system evasion</keyword>
<keyword id="KW-0479">Metal-binding</keyword>
<keyword id="KW-1121">Modulation of host cell cycle by virus</keyword>
<keyword id="KW-0553">Oncogene</keyword>
<keyword id="KW-0804">Transcription</keyword>
<keyword id="KW-0805">Transcription regulation</keyword>
<keyword id="KW-0899">Viral immunoevasion</keyword>
<keyword id="KW-0862">Zinc</keyword>
<keyword id="KW-0863">Zinc-finger</keyword>